<reference key="1">
    <citation type="journal article" date="2007" name="ISME J.">
        <title>Population level functional diversity in a microbial community revealed by comparative genomic and metagenomic analyses.</title>
        <authorList>
            <person name="Bhaya D."/>
            <person name="Grossman A.R."/>
            <person name="Steunou A.-S."/>
            <person name="Khuri N."/>
            <person name="Cohan F.M."/>
            <person name="Hamamura N."/>
            <person name="Melendrez M.C."/>
            <person name="Bateson M.M."/>
            <person name="Ward D.M."/>
            <person name="Heidelberg J.F."/>
        </authorList>
    </citation>
    <scope>NUCLEOTIDE SEQUENCE [LARGE SCALE GENOMIC DNA]</scope>
    <source>
        <strain>JA-2-3B'a(2-13)</strain>
    </source>
</reference>
<sequence>MKRIGLVFCALLLLLGMGARPAAAYPYYAQMAYDNPREATGKIVCANCHLNAMPTRAEVPQAVTPGQVFTIKVGIPYDLSKQQVLADGSKGGLNVGAVVVLPEGFRLATEAEMTEEQRQETAETYITPYSDAKPNILLVGPLPGEQHQEIVFPVVAPDPKEDPSVAFMKYRVYIGANRGRGQLNPDGSLSNNNVFRAPATGRLVNIATLDSDISDLPAELASLVPPEYELPGTRVLSFESESGIHNLVVPPGPELVVAVGDSVKEGDPVTNNPNVGGFGQVERDLVLQSPDRVKWLVAFLAAITITQVLLVLKKKQVELIQAAEILG</sequence>
<feature type="signal peptide" evidence="1">
    <location>
        <begin position="1"/>
        <end position="24"/>
    </location>
</feature>
<feature type="chain" id="PRO_0000342039" description="Cytochrome f">
    <location>
        <begin position="25"/>
        <end position="327"/>
    </location>
</feature>
<feature type="transmembrane region" description="Helical" evidence="1">
    <location>
        <begin position="293"/>
        <end position="313"/>
    </location>
</feature>
<feature type="binding site" description="axial binding residue" evidence="1">
    <location>
        <position position="25"/>
    </location>
    <ligand>
        <name>heme</name>
        <dbReference type="ChEBI" id="CHEBI:30413"/>
    </ligand>
    <ligandPart>
        <name>Fe</name>
        <dbReference type="ChEBI" id="CHEBI:18248"/>
    </ligandPart>
</feature>
<feature type="binding site" description="covalent" evidence="1">
    <location>
        <position position="45"/>
    </location>
    <ligand>
        <name>heme</name>
        <dbReference type="ChEBI" id="CHEBI:30413"/>
    </ligand>
</feature>
<feature type="binding site" description="covalent" evidence="1">
    <location>
        <position position="48"/>
    </location>
    <ligand>
        <name>heme</name>
        <dbReference type="ChEBI" id="CHEBI:30413"/>
    </ligand>
</feature>
<feature type="binding site" description="axial binding residue" evidence="1">
    <location>
        <position position="49"/>
    </location>
    <ligand>
        <name>heme</name>
        <dbReference type="ChEBI" id="CHEBI:30413"/>
    </ligand>
    <ligandPart>
        <name>Fe</name>
        <dbReference type="ChEBI" id="CHEBI:18248"/>
    </ligandPart>
</feature>
<comment type="function">
    <text evidence="1">Component of the cytochrome b6-f complex, which mediates electron transfer between photosystem II (PSII) and photosystem I (PSI), cyclic electron flow around PSI, and state transitions.</text>
</comment>
<comment type="cofactor">
    <cofactor evidence="1">
        <name>heme</name>
        <dbReference type="ChEBI" id="CHEBI:30413"/>
    </cofactor>
    <text evidence="1">Binds 1 heme group covalently.</text>
</comment>
<comment type="subunit">
    <text evidence="1">The 4 large subunits of the cytochrome b6-f complex are cytochrome b6, subunit IV (17 kDa polypeptide, PetD), cytochrome f and the Rieske protein, while the 4 small subunits are PetG, PetL, PetM and PetN. The complex functions as a dimer.</text>
</comment>
<comment type="subcellular location">
    <subcellularLocation>
        <location evidence="1">Cellular thylakoid membrane</location>
        <topology evidence="1">Single-pass membrane protein</topology>
    </subcellularLocation>
</comment>
<comment type="similarity">
    <text evidence="1">Belongs to the cytochrome f family.</text>
</comment>
<evidence type="ECO:0000255" key="1">
    <source>
        <dbReference type="HAMAP-Rule" id="MF_00610"/>
    </source>
</evidence>
<keyword id="KW-0249">Electron transport</keyword>
<keyword id="KW-0349">Heme</keyword>
<keyword id="KW-0408">Iron</keyword>
<keyword id="KW-0472">Membrane</keyword>
<keyword id="KW-0479">Metal-binding</keyword>
<keyword id="KW-0602">Photosynthesis</keyword>
<keyword id="KW-1185">Reference proteome</keyword>
<keyword id="KW-0732">Signal</keyword>
<keyword id="KW-0793">Thylakoid</keyword>
<keyword id="KW-0812">Transmembrane</keyword>
<keyword id="KW-1133">Transmembrane helix</keyword>
<keyword id="KW-0813">Transport</keyword>
<proteinExistence type="inferred from homology"/>
<gene>
    <name evidence="1" type="primary">petA</name>
    <name type="ordered locus">CYB_1621</name>
</gene>
<protein>
    <recommendedName>
        <fullName evidence="1">Cytochrome f</fullName>
    </recommendedName>
</protein>
<name>CYF_SYNJB</name>
<dbReference type="EMBL" id="CP000240">
    <property type="protein sequence ID" value="ABD02582.1"/>
    <property type="molecule type" value="Genomic_DNA"/>
</dbReference>
<dbReference type="RefSeq" id="WP_011433227.1">
    <property type="nucleotide sequence ID" value="NC_007776.1"/>
</dbReference>
<dbReference type="SMR" id="Q2JL40"/>
<dbReference type="STRING" id="321332.CYB_1621"/>
<dbReference type="KEGG" id="cyb:CYB_1621"/>
<dbReference type="eggNOG" id="COG0739">
    <property type="taxonomic scope" value="Bacteria"/>
</dbReference>
<dbReference type="HOGENOM" id="CLU_033498_0_0_3"/>
<dbReference type="OrthoDB" id="581091at2"/>
<dbReference type="Proteomes" id="UP000001938">
    <property type="component" value="Chromosome"/>
</dbReference>
<dbReference type="GO" id="GO:0031676">
    <property type="term" value="C:plasma membrane-derived thylakoid membrane"/>
    <property type="evidence" value="ECO:0007669"/>
    <property type="project" value="UniProtKB-SubCell"/>
</dbReference>
<dbReference type="GO" id="GO:0009055">
    <property type="term" value="F:electron transfer activity"/>
    <property type="evidence" value="ECO:0007669"/>
    <property type="project" value="UniProtKB-UniRule"/>
</dbReference>
<dbReference type="GO" id="GO:0020037">
    <property type="term" value="F:heme binding"/>
    <property type="evidence" value="ECO:0007669"/>
    <property type="project" value="InterPro"/>
</dbReference>
<dbReference type="GO" id="GO:0005506">
    <property type="term" value="F:iron ion binding"/>
    <property type="evidence" value="ECO:0007669"/>
    <property type="project" value="InterPro"/>
</dbReference>
<dbReference type="GO" id="GO:0015979">
    <property type="term" value="P:photosynthesis"/>
    <property type="evidence" value="ECO:0007669"/>
    <property type="project" value="UniProtKB-UniRule"/>
</dbReference>
<dbReference type="Gene3D" id="2.40.50.100">
    <property type="match status" value="1"/>
</dbReference>
<dbReference type="Gene3D" id="2.60.40.830">
    <property type="entry name" value="Cytochrome f large domain"/>
    <property type="match status" value="1"/>
</dbReference>
<dbReference type="Gene3D" id="1.20.5.700">
    <property type="entry name" value="Single helix bin"/>
    <property type="match status" value="1"/>
</dbReference>
<dbReference type="HAMAP" id="MF_00610">
    <property type="entry name" value="Cytb6_f_cytF"/>
    <property type="match status" value="1"/>
</dbReference>
<dbReference type="InterPro" id="IPR024058">
    <property type="entry name" value="Cyt-f_TM"/>
</dbReference>
<dbReference type="InterPro" id="IPR002325">
    <property type="entry name" value="Cyt_f"/>
</dbReference>
<dbReference type="InterPro" id="IPR024094">
    <property type="entry name" value="Cyt_f_lg_dom"/>
</dbReference>
<dbReference type="InterPro" id="IPR036826">
    <property type="entry name" value="Cyt_f_lg_dom_sf"/>
</dbReference>
<dbReference type="InterPro" id="IPR011054">
    <property type="entry name" value="Rudment_hybrid_motif"/>
</dbReference>
<dbReference type="PANTHER" id="PTHR33288">
    <property type="match status" value="1"/>
</dbReference>
<dbReference type="PANTHER" id="PTHR33288:SF10">
    <property type="entry name" value="CYTOCHROME F"/>
    <property type="match status" value="1"/>
</dbReference>
<dbReference type="Pfam" id="PF01333">
    <property type="entry name" value="Apocytochr_F_C"/>
    <property type="match status" value="1"/>
</dbReference>
<dbReference type="Pfam" id="PF16639">
    <property type="entry name" value="Apocytochr_F_N"/>
    <property type="match status" value="1"/>
</dbReference>
<dbReference type="PRINTS" id="PR00610">
    <property type="entry name" value="CYTOCHROMEF"/>
</dbReference>
<dbReference type="SUPFAM" id="SSF103431">
    <property type="entry name" value="Cytochrome f subunit of the cytochrome b6f complex, transmembrane anchor"/>
    <property type="match status" value="1"/>
</dbReference>
<dbReference type="SUPFAM" id="SSF49441">
    <property type="entry name" value="Cytochrome f, large domain"/>
    <property type="match status" value="1"/>
</dbReference>
<dbReference type="SUPFAM" id="SSF51246">
    <property type="entry name" value="Rudiment single hybrid motif"/>
    <property type="match status" value="1"/>
</dbReference>
<dbReference type="PROSITE" id="PS51010">
    <property type="entry name" value="CYTF"/>
    <property type="match status" value="1"/>
</dbReference>
<organism>
    <name type="scientific">Synechococcus sp. (strain JA-2-3B'a(2-13))</name>
    <name type="common">Cyanobacteria bacterium Yellowstone B-Prime</name>
    <dbReference type="NCBI Taxonomy" id="321332"/>
    <lineage>
        <taxon>Bacteria</taxon>
        <taxon>Bacillati</taxon>
        <taxon>Cyanobacteriota</taxon>
        <taxon>Cyanophyceae</taxon>
        <taxon>Synechococcales</taxon>
        <taxon>Synechococcaceae</taxon>
        <taxon>Synechococcus</taxon>
    </lineage>
</organism>
<accession>Q2JL40</accession>